<reference evidence="4" key="1">
    <citation type="journal article" date="2001" name="Mol. Genet. Genomics">
        <title>The X element, a novel LINE transposable element from Drosophila melanogaster.</title>
        <authorList>
            <person name="Tudor M."/>
            <person name="Davis A.J."/>
            <person name="Feldman M."/>
            <person name="Grammatikaki M."/>
            <person name="O'Hare K."/>
        </authorList>
    </citation>
    <scope>NUCLEOTIDE SEQUENCE [GENOMIC DNA]</scope>
</reference>
<feature type="chain" id="PRO_0000076222" description="Nucleic-acid-binding protein from transposon X-element">
    <location>
        <begin position="1"/>
        <end position="501"/>
    </location>
</feature>
<feature type="zinc finger region" description="CCHC-type" evidence="1">
    <location>
        <begin position="285"/>
        <end position="302"/>
    </location>
</feature>
<feature type="region of interest" description="Disordered" evidence="2">
    <location>
        <begin position="20"/>
        <end position="71"/>
    </location>
</feature>
<feature type="region of interest" description="Disordered" evidence="2">
    <location>
        <begin position="105"/>
        <end position="128"/>
    </location>
</feature>
<feature type="region of interest" description="Disordered" evidence="2">
    <location>
        <begin position="353"/>
        <end position="385"/>
    </location>
</feature>
<feature type="region of interest" description="Disordered" evidence="2">
    <location>
        <begin position="400"/>
        <end position="443"/>
    </location>
</feature>
<feature type="compositionally biased region" description="Low complexity" evidence="2">
    <location>
        <begin position="407"/>
        <end position="422"/>
    </location>
</feature>
<feature type="compositionally biased region" description="Polar residues" evidence="2">
    <location>
        <begin position="434"/>
        <end position="443"/>
    </location>
</feature>
<dbReference type="EMBL" id="AF237761">
    <property type="protein sequence ID" value="AAF81410.1"/>
    <property type="molecule type" value="Genomic_DNA"/>
</dbReference>
<dbReference type="SMR" id="Q9NBX5"/>
<dbReference type="FlyBase" id="FBgn0041613">
    <property type="gene designation" value="X-element\ORF1"/>
</dbReference>
<dbReference type="PRO" id="PR:Q9NBX5"/>
<dbReference type="GO" id="GO:0003676">
    <property type="term" value="F:nucleic acid binding"/>
    <property type="evidence" value="ECO:0007669"/>
    <property type="project" value="InterPro"/>
</dbReference>
<dbReference type="GO" id="GO:0008270">
    <property type="term" value="F:zinc ion binding"/>
    <property type="evidence" value="ECO:0007669"/>
    <property type="project" value="UniProtKB-KW"/>
</dbReference>
<dbReference type="GO" id="GO:0006313">
    <property type="term" value="P:DNA transposition"/>
    <property type="evidence" value="ECO:0000315"/>
    <property type="project" value="UniProtKB"/>
</dbReference>
<dbReference type="InterPro" id="IPR006579">
    <property type="entry name" value="Pre_C2HC_dom"/>
</dbReference>
<dbReference type="InterPro" id="IPR036875">
    <property type="entry name" value="Znf_CCHC_sf"/>
</dbReference>
<dbReference type="PANTHER" id="PTHR33273">
    <property type="entry name" value="DOMAIN-CONTAINING PROTEIN, PUTATIVE-RELATED"/>
    <property type="match status" value="1"/>
</dbReference>
<dbReference type="PANTHER" id="PTHR33273:SF2">
    <property type="entry name" value="ENDONUCLEASE_EXONUCLEASE_PHOSPHATASE DOMAIN-CONTAINING PROTEIN"/>
    <property type="match status" value="1"/>
</dbReference>
<dbReference type="Pfam" id="PF07530">
    <property type="entry name" value="PRE_C2HC"/>
    <property type="match status" value="1"/>
</dbReference>
<dbReference type="SMART" id="SM00596">
    <property type="entry name" value="PRE_C2HC"/>
    <property type="match status" value="1"/>
</dbReference>
<dbReference type="SUPFAM" id="SSF57756">
    <property type="entry name" value="Retrovirus zinc finger-like domains"/>
    <property type="match status" value="1"/>
</dbReference>
<accession>Q9NBX5</accession>
<protein>
    <recommendedName>
        <fullName>Nucleic-acid-binding protein from transposon X-element</fullName>
    </recommendedName>
</protein>
<sequence length="501" mass="55743">MNTLNETAAADESLDTAFLSSPQCAAPQRFQKIKRKSRASPETERKKPKSTIGKQGENPSATEPRYGGNSNRFGLLAHLTADKQVGNEIGDLYDQPSTSHQAAIAAAKRDAASAGTTSSAKRAQSKPPPIVMEGVDDVYLMMQSIENIVDLEKIEARASMSGVLRLYAADANTFRTIVNWLEIEEYEFHCYQLKEDRPYRVCVKGLHHSTLHHQIKDELEKIGHKVLDIHTPLRRNEPGTSKASPVNMFFLNIAAAANNKEILAVKALCHMRVVIEPLRKRNAIVQCHRCQQIGHTAKYCRKAHICVKCAGEHPAKDCTRPRIELCTCYNCGGQHPANYKGCSKLQAFLQRSRPRSGVAGRTEVSDRPTPRGLAGGKEIPSSRGGISYADVARGSIHHKQPMSLTHQQQKQKQQPYDGSPSRQRSRSRTRASRGTLQRSTDASSSIEAILQTLNENINSLRSIQEKQMELMMMMMKQQQQQSHQQGQIINLLTALQARQAP</sequence>
<gene>
    <name evidence="5" type="primary">ORF1</name>
</gene>
<proteinExistence type="predicted"/>
<keyword id="KW-0479">Metal-binding</keyword>
<keyword id="KW-0814">Transposable element</keyword>
<keyword id="KW-0946">Virion</keyword>
<keyword id="KW-0862">Zinc</keyword>
<keyword id="KW-0863">Zinc-finger</keyword>
<evidence type="ECO:0000255" key="1"/>
<evidence type="ECO:0000256" key="2">
    <source>
        <dbReference type="SAM" id="MobiDB-lite"/>
    </source>
</evidence>
<evidence type="ECO:0000305" key="3"/>
<evidence type="ECO:0000312" key="4">
    <source>
        <dbReference type="EMBL" id="AAF81410.1"/>
    </source>
</evidence>
<evidence type="ECO:0000312" key="5">
    <source>
        <dbReference type="FlyBase" id="FBgn0041613"/>
    </source>
</evidence>
<name>GAGXE_DROME</name>
<organism>
    <name type="scientific">Drosophila melanogaster</name>
    <name type="common">Fruit fly</name>
    <dbReference type="NCBI Taxonomy" id="7227"/>
    <lineage>
        <taxon>Eukaryota</taxon>
        <taxon>Metazoa</taxon>
        <taxon>Ecdysozoa</taxon>
        <taxon>Arthropoda</taxon>
        <taxon>Hexapoda</taxon>
        <taxon>Insecta</taxon>
        <taxon>Pterygota</taxon>
        <taxon>Neoptera</taxon>
        <taxon>Endopterygota</taxon>
        <taxon>Diptera</taxon>
        <taxon>Brachycera</taxon>
        <taxon>Muscomorpha</taxon>
        <taxon>Ephydroidea</taxon>
        <taxon>Drosophilidae</taxon>
        <taxon>Drosophila</taxon>
        <taxon>Sophophora</taxon>
    </lineage>
</organism>
<comment type="function">
    <text evidence="3">Strongly basic protein that binds directly to retroviral RNA and may be involved in its packaging and in the reverse transcription process.</text>
</comment>
<comment type="subcellular location">
    <subcellularLocation>
        <location evidence="3">Virion</location>
    </subcellularLocation>
</comment>